<protein>
    <recommendedName>
        <fullName>Uncharacterized protein MJ1310</fullName>
    </recommendedName>
</protein>
<dbReference type="EMBL" id="L77117">
    <property type="protein sequence ID" value="AAB99317.1"/>
    <property type="molecule type" value="Genomic_DNA"/>
</dbReference>
<dbReference type="PIR" id="E64463">
    <property type="entry name" value="E64463"/>
</dbReference>
<dbReference type="SMR" id="Q58706"/>
<dbReference type="STRING" id="243232.MJ_1310"/>
<dbReference type="PaxDb" id="243232-MJ_1310"/>
<dbReference type="EnsemblBacteria" id="AAB99317">
    <property type="protein sequence ID" value="AAB99317"/>
    <property type="gene ID" value="MJ_1310"/>
</dbReference>
<dbReference type="KEGG" id="mja:MJ_1310"/>
<dbReference type="eggNOG" id="arCOG03072">
    <property type="taxonomic scope" value="Archaea"/>
</dbReference>
<dbReference type="HOGENOM" id="CLU_082058_2_1_2"/>
<dbReference type="InParanoid" id="Q58706"/>
<dbReference type="PhylomeDB" id="Q58706"/>
<dbReference type="Proteomes" id="UP000000805">
    <property type="component" value="Chromosome"/>
</dbReference>
<dbReference type="GO" id="GO:0005886">
    <property type="term" value="C:plasma membrane"/>
    <property type="evidence" value="ECO:0007669"/>
    <property type="project" value="UniProtKB-SubCell"/>
</dbReference>
<dbReference type="GO" id="GO:0015385">
    <property type="term" value="F:sodium:proton antiporter activity"/>
    <property type="evidence" value="ECO:0000318"/>
    <property type="project" value="GO_Central"/>
</dbReference>
<dbReference type="GO" id="GO:0035725">
    <property type="term" value="P:sodium ion transmembrane transport"/>
    <property type="evidence" value="ECO:0000318"/>
    <property type="project" value="GO_Central"/>
</dbReference>
<dbReference type="Gene3D" id="1.10.287.3510">
    <property type="match status" value="1"/>
</dbReference>
<dbReference type="InterPro" id="IPR050601">
    <property type="entry name" value="CPA3_antiporter_subunitC"/>
</dbReference>
<dbReference type="InterPro" id="IPR039428">
    <property type="entry name" value="NUOK/Mnh_C1-like"/>
</dbReference>
<dbReference type="NCBIfam" id="NF005618">
    <property type="entry name" value="PRK07375.1-3"/>
    <property type="match status" value="1"/>
</dbReference>
<dbReference type="PANTHER" id="PTHR34583">
    <property type="entry name" value="ANTIPORTER SUBUNIT MNHC2-RELATED"/>
    <property type="match status" value="1"/>
</dbReference>
<dbReference type="PANTHER" id="PTHR34583:SF2">
    <property type="entry name" value="ANTIPORTER SUBUNIT MNHC2-RELATED"/>
    <property type="match status" value="1"/>
</dbReference>
<dbReference type="Pfam" id="PF00420">
    <property type="entry name" value="Oxidored_q2"/>
    <property type="match status" value="1"/>
</dbReference>
<gene>
    <name type="ordered locus">MJ1310</name>
</gene>
<name>Y1310_METJA</name>
<sequence length="128" mass="13938">MIMINYLVNRMDFQMASFITSGLLVIIGLYGVFFVDNVLKKIIALEILGSGVNLALIAIGYNGGTIPIKLPGVSVEVFAKESAYPLTHALVLTNIVIEASMLAVMLGVSIILYKKYKTLRSSVILKED</sequence>
<organism>
    <name type="scientific">Methanocaldococcus jannaschii (strain ATCC 43067 / DSM 2661 / JAL-1 / JCM 10045 / NBRC 100440)</name>
    <name type="common">Methanococcus jannaschii</name>
    <dbReference type="NCBI Taxonomy" id="243232"/>
    <lineage>
        <taxon>Archaea</taxon>
        <taxon>Methanobacteriati</taxon>
        <taxon>Methanobacteriota</taxon>
        <taxon>Methanomada group</taxon>
        <taxon>Methanococci</taxon>
        <taxon>Methanococcales</taxon>
        <taxon>Methanocaldococcaceae</taxon>
        <taxon>Methanocaldococcus</taxon>
    </lineage>
</organism>
<accession>Q58706</accession>
<comment type="subcellular location">
    <subcellularLocation>
        <location evidence="2">Cell membrane</location>
        <topology evidence="2">Multi-pass membrane protein</topology>
    </subcellularLocation>
</comment>
<reference key="1">
    <citation type="journal article" date="1996" name="Science">
        <title>Complete genome sequence of the methanogenic archaeon, Methanococcus jannaschii.</title>
        <authorList>
            <person name="Bult C.J."/>
            <person name="White O."/>
            <person name="Olsen G.J."/>
            <person name="Zhou L."/>
            <person name="Fleischmann R.D."/>
            <person name="Sutton G.G."/>
            <person name="Blake J.A."/>
            <person name="FitzGerald L.M."/>
            <person name="Clayton R.A."/>
            <person name="Gocayne J.D."/>
            <person name="Kerlavage A.R."/>
            <person name="Dougherty B.A."/>
            <person name="Tomb J.-F."/>
            <person name="Adams M.D."/>
            <person name="Reich C.I."/>
            <person name="Overbeek R."/>
            <person name="Kirkness E.F."/>
            <person name="Weinstock K.G."/>
            <person name="Merrick J.M."/>
            <person name="Glodek A."/>
            <person name="Scott J.L."/>
            <person name="Geoghagen N.S.M."/>
            <person name="Weidman J.F."/>
            <person name="Fuhrmann J.L."/>
            <person name="Nguyen D."/>
            <person name="Utterback T.R."/>
            <person name="Kelley J.M."/>
            <person name="Peterson J.D."/>
            <person name="Sadow P.W."/>
            <person name="Hanna M.C."/>
            <person name="Cotton M.D."/>
            <person name="Roberts K.M."/>
            <person name="Hurst M.A."/>
            <person name="Kaine B.P."/>
            <person name="Borodovsky M."/>
            <person name="Klenk H.-P."/>
            <person name="Fraser C.M."/>
            <person name="Smith H.O."/>
            <person name="Woese C.R."/>
            <person name="Venter J.C."/>
        </authorList>
    </citation>
    <scope>NUCLEOTIDE SEQUENCE [LARGE SCALE GENOMIC DNA]</scope>
    <source>
        <strain>ATCC 43067 / DSM 2661 / JAL-1 / JCM 10045 / NBRC 100440</strain>
    </source>
</reference>
<keyword id="KW-1003">Cell membrane</keyword>
<keyword id="KW-0472">Membrane</keyword>
<keyword id="KW-1185">Reference proteome</keyword>
<keyword id="KW-0812">Transmembrane</keyword>
<keyword id="KW-1133">Transmembrane helix</keyword>
<proteinExistence type="predicted"/>
<evidence type="ECO:0000255" key="1"/>
<evidence type="ECO:0000305" key="2"/>
<feature type="chain" id="PRO_0000107268" description="Uncharacterized protein MJ1310">
    <location>
        <begin position="1"/>
        <end position="128"/>
    </location>
</feature>
<feature type="transmembrane region" description="Helical" evidence="1">
    <location>
        <begin position="13"/>
        <end position="35"/>
    </location>
</feature>
<feature type="transmembrane region" description="Helical" evidence="1">
    <location>
        <begin position="42"/>
        <end position="64"/>
    </location>
</feature>
<feature type="transmembrane region" description="Helical" evidence="1">
    <location>
        <begin position="90"/>
        <end position="112"/>
    </location>
</feature>